<gene>
    <name type="primary">GATA17</name>
    <name type="ordered locus">At3g16870</name>
    <name type="ORF">MUH15.3</name>
</gene>
<evidence type="ECO:0000250" key="1"/>
<evidence type="ECO:0000255" key="2">
    <source>
        <dbReference type="PROSITE-ProRule" id="PRU00094"/>
    </source>
</evidence>
<evidence type="ECO:0000256" key="3">
    <source>
        <dbReference type="SAM" id="MobiDB-lite"/>
    </source>
</evidence>
<evidence type="ECO:0000305" key="4"/>
<protein>
    <recommendedName>
        <fullName>GATA transcription factor 17</fullName>
    </recommendedName>
</protein>
<dbReference type="EMBL" id="AP001308">
    <property type="protein sequence ID" value="BAB03075.1"/>
    <property type="molecule type" value="Genomic_DNA"/>
</dbReference>
<dbReference type="EMBL" id="CP002686">
    <property type="protein sequence ID" value="AEE75878.1"/>
    <property type="molecule type" value="Genomic_DNA"/>
</dbReference>
<dbReference type="EMBL" id="BT010844">
    <property type="protein sequence ID" value="AAR24211.1"/>
    <property type="molecule type" value="mRNA"/>
</dbReference>
<dbReference type="EMBL" id="BT012611">
    <property type="protein sequence ID" value="AAT06430.1"/>
    <property type="molecule type" value="mRNA"/>
</dbReference>
<dbReference type="RefSeq" id="NP_188312.1">
    <property type="nucleotide sequence ID" value="NM_112563.3"/>
</dbReference>
<dbReference type="SMR" id="Q9LIB5"/>
<dbReference type="BioGRID" id="6275">
    <property type="interactions" value="9"/>
</dbReference>
<dbReference type="FunCoup" id="Q9LIB5">
    <property type="interactions" value="5"/>
</dbReference>
<dbReference type="IntAct" id="Q9LIB5">
    <property type="interactions" value="9"/>
</dbReference>
<dbReference type="STRING" id="3702.Q9LIB5"/>
<dbReference type="PaxDb" id="3702-AT3G16870.1"/>
<dbReference type="EnsemblPlants" id="AT3G16870.1">
    <property type="protein sequence ID" value="AT3G16870.1"/>
    <property type="gene ID" value="AT3G16870"/>
</dbReference>
<dbReference type="GeneID" id="820942"/>
<dbReference type="Gramene" id="AT3G16870.1">
    <property type="protein sequence ID" value="AT3G16870.1"/>
    <property type="gene ID" value="AT3G16870"/>
</dbReference>
<dbReference type="KEGG" id="ath:AT3G16870"/>
<dbReference type="Araport" id="AT3G16870"/>
<dbReference type="TAIR" id="AT3G16870">
    <property type="gene designation" value="GATA17"/>
</dbReference>
<dbReference type="eggNOG" id="KOG1601">
    <property type="taxonomic scope" value="Eukaryota"/>
</dbReference>
<dbReference type="HOGENOM" id="CLU_060197_1_1_1"/>
<dbReference type="InParanoid" id="Q9LIB5"/>
<dbReference type="OMA" id="GMRSEEK"/>
<dbReference type="OrthoDB" id="2162994at2759"/>
<dbReference type="PhylomeDB" id="Q9LIB5"/>
<dbReference type="PRO" id="PR:Q9LIB5"/>
<dbReference type="Proteomes" id="UP000006548">
    <property type="component" value="Chromosome 3"/>
</dbReference>
<dbReference type="ExpressionAtlas" id="Q9LIB5">
    <property type="expression patterns" value="baseline and differential"/>
</dbReference>
<dbReference type="GO" id="GO:0005634">
    <property type="term" value="C:nucleus"/>
    <property type="evidence" value="ECO:0007669"/>
    <property type="project" value="UniProtKB-SubCell"/>
</dbReference>
<dbReference type="GO" id="GO:0003700">
    <property type="term" value="F:DNA-binding transcription factor activity"/>
    <property type="evidence" value="ECO:0000250"/>
    <property type="project" value="TAIR"/>
</dbReference>
<dbReference type="GO" id="GO:0000976">
    <property type="term" value="F:transcription cis-regulatory region binding"/>
    <property type="evidence" value="ECO:0000353"/>
    <property type="project" value="TAIR"/>
</dbReference>
<dbReference type="GO" id="GO:0008270">
    <property type="term" value="F:zinc ion binding"/>
    <property type="evidence" value="ECO:0007669"/>
    <property type="project" value="UniProtKB-KW"/>
</dbReference>
<dbReference type="CDD" id="cd00202">
    <property type="entry name" value="ZnF_GATA"/>
    <property type="match status" value="1"/>
</dbReference>
<dbReference type="FunFam" id="3.30.50.10:FF:000060">
    <property type="entry name" value="GATA transcription factor 16"/>
    <property type="match status" value="1"/>
</dbReference>
<dbReference type="Gene3D" id="3.30.50.10">
    <property type="entry name" value="Erythroid Transcription Factor GATA-1, subunit A"/>
    <property type="match status" value="1"/>
</dbReference>
<dbReference type="InterPro" id="IPR000679">
    <property type="entry name" value="Znf_GATA"/>
</dbReference>
<dbReference type="InterPro" id="IPR013088">
    <property type="entry name" value="Znf_NHR/GATA"/>
</dbReference>
<dbReference type="PANTHER" id="PTHR47172:SF11">
    <property type="entry name" value="GATA TRANSCRIPTION FACTOR 17"/>
    <property type="match status" value="1"/>
</dbReference>
<dbReference type="PANTHER" id="PTHR47172">
    <property type="entry name" value="OS01G0976800 PROTEIN"/>
    <property type="match status" value="1"/>
</dbReference>
<dbReference type="Pfam" id="PF00320">
    <property type="entry name" value="GATA"/>
    <property type="match status" value="1"/>
</dbReference>
<dbReference type="SMART" id="SM00401">
    <property type="entry name" value="ZnF_GATA"/>
    <property type="match status" value="1"/>
</dbReference>
<dbReference type="SUPFAM" id="SSF57716">
    <property type="entry name" value="Glucocorticoid receptor-like (DNA-binding domain)"/>
    <property type="match status" value="1"/>
</dbReference>
<dbReference type="PROSITE" id="PS00344">
    <property type="entry name" value="GATA_ZN_FINGER_1"/>
    <property type="match status" value="1"/>
</dbReference>
<dbReference type="PROSITE" id="PS50114">
    <property type="entry name" value="GATA_ZN_FINGER_2"/>
    <property type="match status" value="1"/>
</dbReference>
<reference key="1">
    <citation type="journal article" date="2000" name="DNA Res.">
        <title>Structural analysis of Arabidopsis thaliana chromosome 3. II. Sequence features of the 4,251,695 bp regions covered by 90 P1, TAC and BAC clones.</title>
        <authorList>
            <person name="Kaneko T."/>
            <person name="Katoh T."/>
            <person name="Sato S."/>
            <person name="Nakamura Y."/>
            <person name="Asamizu E."/>
            <person name="Tabata S."/>
        </authorList>
    </citation>
    <scope>NUCLEOTIDE SEQUENCE [LARGE SCALE GENOMIC DNA]</scope>
    <source>
        <strain>cv. Columbia</strain>
    </source>
</reference>
<reference key="2">
    <citation type="journal article" date="2017" name="Plant J.">
        <title>Araport11: a complete reannotation of the Arabidopsis thaliana reference genome.</title>
        <authorList>
            <person name="Cheng C.Y."/>
            <person name="Krishnakumar V."/>
            <person name="Chan A.P."/>
            <person name="Thibaud-Nissen F."/>
            <person name="Schobel S."/>
            <person name="Town C.D."/>
        </authorList>
    </citation>
    <scope>GENOME REANNOTATION</scope>
    <source>
        <strain>cv. Columbia</strain>
    </source>
</reference>
<reference key="3">
    <citation type="submission" date="2004-05" db="EMBL/GenBank/DDBJ databases">
        <title>Arabidopsis cDNA clones.</title>
        <authorList>
            <person name="Cheuk R.F."/>
            <person name="Chen H."/>
            <person name="Kim C.J."/>
            <person name="Shinn P."/>
            <person name="Ecker J.R."/>
        </authorList>
    </citation>
    <scope>NUCLEOTIDE SEQUENCE [LARGE SCALE MRNA]</scope>
    <source>
        <strain>cv. Columbia</strain>
    </source>
</reference>
<reference key="4">
    <citation type="journal article" date="2004" name="Plant Physiol.">
        <title>The GATA family of transcription factors in Arabidopsis and rice.</title>
        <authorList>
            <person name="Reyes J.C."/>
            <person name="Muro-Pastor M.I."/>
            <person name="Florencio F.J."/>
        </authorList>
    </citation>
    <scope>GENE FAMILY ORGANIZATION</scope>
</reference>
<organism>
    <name type="scientific">Arabidopsis thaliana</name>
    <name type="common">Mouse-ear cress</name>
    <dbReference type="NCBI Taxonomy" id="3702"/>
    <lineage>
        <taxon>Eukaryota</taxon>
        <taxon>Viridiplantae</taxon>
        <taxon>Streptophyta</taxon>
        <taxon>Embryophyta</taxon>
        <taxon>Tracheophyta</taxon>
        <taxon>Spermatophyta</taxon>
        <taxon>Magnoliopsida</taxon>
        <taxon>eudicotyledons</taxon>
        <taxon>Gunneridae</taxon>
        <taxon>Pentapetalae</taxon>
        <taxon>rosids</taxon>
        <taxon>malvids</taxon>
        <taxon>Brassicales</taxon>
        <taxon>Brassicaceae</taxon>
        <taxon>Camelineae</taxon>
        <taxon>Arabidopsis</taxon>
    </lineage>
</organism>
<accession>Q9LIB5</accession>
<proteinExistence type="evidence at transcript level"/>
<sequence>MSEGSEDTKTKLDSAGELSDVDNENCSSSGSGGGSSSGDTKRTCVDCGTIRTPLWRGGPAGPKSLCNACGIKSRKKRQAALGMRSEEKKKNRKSNCNNDLNLDHRNAKKYKINIVDDGKIDIDDDPKICNNKRSSSSSSNKGVSKFLDLGFKVPVMKRSAVEKKRLWRKLGEEERAAVLLMALSCSSVYA</sequence>
<feature type="chain" id="PRO_0000083446" description="GATA transcription factor 17">
    <location>
        <begin position="1"/>
        <end position="190"/>
    </location>
</feature>
<feature type="zinc finger region" description="GATA-type" evidence="2">
    <location>
        <begin position="38"/>
        <end position="92"/>
    </location>
</feature>
<feature type="region of interest" description="Disordered" evidence="3">
    <location>
        <begin position="1"/>
        <end position="42"/>
    </location>
</feature>
<feature type="region of interest" description="Disordered" evidence="3">
    <location>
        <begin position="77"/>
        <end position="101"/>
    </location>
</feature>
<feature type="compositionally biased region" description="Basic and acidic residues" evidence="3">
    <location>
        <begin position="1"/>
        <end position="14"/>
    </location>
</feature>
<keyword id="KW-0238">DNA-binding</keyword>
<keyword id="KW-0479">Metal-binding</keyword>
<keyword id="KW-0539">Nucleus</keyword>
<keyword id="KW-1185">Reference proteome</keyword>
<keyword id="KW-0804">Transcription</keyword>
<keyword id="KW-0805">Transcription regulation</keyword>
<keyword id="KW-0862">Zinc</keyword>
<keyword id="KW-0863">Zinc-finger</keyword>
<name>GAT17_ARATH</name>
<comment type="function">
    <text evidence="1">Transcriptional regulator that specifically binds 5'-GATA-3' or 5'-GAT-3' motifs within gene promoters.</text>
</comment>
<comment type="subcellular location">
    <subcellularLocation>
        <location evidence="4">Nucleus</location>
    </subcellularLocation>
</comment>
<comment type="similarity">
    <text evidence="4">Belongs to the type IV zinc-finger family. Class B subfamily.</text>
</comment>